<dbReference type="EMBL" id="AL590842">
    <property type="protein sequence ID" value="CAL21058.1"/>
    <property type="molecule type" value="Genomic_DNA"/>
</dbReference>
<dbReference type="EMBL" id="AE009952">
    <property type="protein sequence ID" value="AAM85472.1"/>
    <property type="molecule type" value="Genomic_DNA"/>
</dbReference>
<dbReference type="EMBL" id="AE017042">
    <property type="protein sequence ID" value="AAS62424.1"/>
    <property type="molecule type" value="Genomic_DNA"/>
</dbReference>
<dbReference type="PIR" id="AG0296">
    <property type="entry name" value="AG0296"/>
</dbReference>
<dbReference type="RefSeq" id="WP_002211833.1">
    <property type="nucleotide sequence ID" value="NZ_WUCM01000025.1"/>
</dbReference>
<dbReference type="RefSeq" id="YP_002347394.1">
    <property type="nucleotide sequence ID" value="NC_003143.1"/>
</dbReference>
<dbReference type="SMR" id="Q8ZDW8"/>
<dbReference type="STRING" id="214092.YPO2430"/>
<dbReference type="PaxDb" id="214092-YPO2430"/>
<dbReference type="DNASU" id="1146852"/>
<dbReference type="EnsemblBacteria" id="AAS62424">
    <property type="protein sequence ID" value="AAS62424"/>
    <property type="gene ID" value="YP_2218"/>
</dbReference>
<dbReference type="GeneID" id="96665819"/>
<dbReference type="KEGG" id="ype:YPO2430"/>
<dbReference type="KEGG" id="ypk:y1905"/>
<dbReference type="KEGG" id="ypm:YP_2218"/>
<dbReference type="PATRIC" id="fig|214092.21.peg.2839"/>
<dbReference type="eggNOG" id="COG0292">
    <property type="taxonomic scope" value="Bacteria"/>
</dbReference>
<dbReference type="HOGENOM" id="CLU_123265_0_1_6"/>
<dbReference type="OMA" id="GRRKNVW"/>
<dbReference type="OrthoDB" id="9808966at2"/>
<dbReference type="Proteomes" id="UP000000815">
    <property type="component" value="Chromosome"/>
</dbReference>
<dbReference type="Proteomes" id="UP000001019">
    <property type="component" value="Chromosome"/>
</dbReference>
<dbReference type="Proteomes" id="UP000002490">
    <property type="component" value="Chromosome"/>
</dbReference>
<dbReference type="GO" id="GO:0022625">
    <property type="term" value="C:cytosolic large ribosomal subunit"/>
    <property type="evidence" value="ECO:0000318"/>
    <property type="project" value="GO_Central"/>
</dbReference>
<dbReference type="GO" id="GO:0019843">
    <property type="term" value="F:rRNA binding"/>
    <property type="evidence" value="ECO:0007669"/>
    <property type="project" value="UniProtKB-UniRule"/>
</dbReference>
<dbReference type="GO" id="GO:0003735">
    <property type="term" value="F:structural constituent of ribosome"/>
    <property type="evidence" value="ECO:0000318"/>
    <property type="project" value="GO_Central"/>
</dbReference>
<dbReference type="GO" id="GO:0000027">
    <property type="term" value="P:ribosomal large subunit assembly"/>
    <property type="evidence" value="ECO:0007669"/>
    <property type="project" value="UniProtKB-UniRule"/>
</dbReference>
<dbReference type="GO" id="GO:0006412">
    <property type="term" value="P:translation"/>
    <property type="evidence" value="ECO:0007669"/>
    <property type="project" value="InterPro"/>
</dbReference>
<dbReference type="CDD" id="cd07026">
    <property type="entry name" value="Ribosomal_L20"/>
    <property type="match status" value="1"/>
</dbReference>
<dbReference type="FunFam" id="1.10.1900.20:FF:000001">
    <property type="entry name" value="50S ribosomal protein L20"/>
    <property type="match status" value="1"/>
</dbReference>
<dbReference type="Gene3D" id="6.10.160.10">
    <property type="match status" value="1"/>
</dbReference>
<dbReference type="Gene3D" id="1.10.1900.20">
    <property type="entry name" value="Ribosomal protein L20"/>
    <property type="match status" value="1"/>
</dbReference>
<dbReference type="HAMAP" id="MF_00382">
    <property type="entry name" value="Ribosomal_bL20"/>
    <property type="match status" value="1"/>
</dbReference>
<dbReference type="InterPro" id="IPR005813">
    <property type="entry name" value="Ribosomal_bL20"/>
</dbReference>
<dbReference type="InterPro" id="IPR049946">
    <property type="entry name" value="RIBOSOMAL_L20_CS"/>
</dbReference>
<dbReference type="InterPro" id="IPR035566">
    <property type="entry name" value="Ribosomal_protein_bL20_C"/>
</dbReference>
<dbReference type="NCBIfam" id="TIGR01032">
    <property type="entry name" value="rplT_bact"/>
    <property type="match status" value="1"/>
</dbReference>
<dbReference type="PANTHER" id="PTHR10986">
    <property type="entry name" value="39S RIBOSOMAL PROTEIN L20"/>
    <property type="match status" value="1"/>
</dbReference>
<dbReference type="Pfam" id="PF00453">
    <property type="entry name" value="Ribosomal_L20"/>
    <property type="match status" value="1"/>
</dbReference>
<dbReference type="PRINTS" id="PR00062">
    <property type="entry name" value="RIBOSOMALL20"/>
</dbReference>
<dbReference type="SUPFAM" id="SSF74731">
    <property type="entry name" value="Ribosomal protein L20"/>
    <property type="match status" value="1"/>
</dbReference>
<dbReference type="PROSITE" id="PS00937">
    <property type="entry name" value="RIBOSOMAL_L20"/>
    <property type="match status" value="1"/>
</dbReference>
<name>RL20_YERPE</name>
<organism>
    <name type="scientific">Yersinia pestis</name>
    <dbReference type="NCBI Taxonomy" id="632"/>
    <lineage>
        <taxon>Bacteria</taxon>
        <taxon>Pseudomonadati</taxon>
        <taxon>Pseudomonadota</taxon>
        <taxon>Gammaproteobacteria</taxon>
        <taxon>Enterobacterales</taxon>
        <taxon>Yersiniaceae</taxon>
        <taxon>Yersinia</taxon>
    </lineage>
</organism>
<gene>
    <name evidence="1" type="primary">rplT</name>
    <name type="ordered locus">YPO2430</name>
    <name type="ordered locus">y1905</name>
    <name type="ordered locus">YP_2218</name>
</gene>
<feature type="chain" id="PRO_0000177271" description="Large ribosomal subunit protein bL20">
    <location>
        <begin position="1"/>
        <end position="118"/>
    </location>
</feature>
<reference key="1">
    <citation type="journal article" date="2001" name="Nature">
        <title>Genome sequence of Yersinia pestis, the causative agent of plague.</title>
        <authorList>
            <person name="Parkhill J."/>
            <person name="Wren B.W."/>
            <person name="Thomson N.R."/>
            <person name="Titball R.W."/>
            <person name="Holden M.T.G."/>
            <person name="Prentice M.B."/>
            <person name="Sebaihia M."/>
            <person name="James K.D."/>
            <person name="Churcher C.M."/>
            <person name="Mungall K.L."/>
            <person name="Baker S."/>
            <person name="Basham D."/>
            <person name="Bentley S.D."/>
            <person name="Brooks K."/>
            <person name="Cerdeno-Tarraga A.-M."/>
            <person name="Chillingworth T."/>
            <person name="Cronin A."/>
            <person name="Davies R.M."/>
            <person name="Davis P."/>
            <person name="Dougan G."/>
            <person name="Feltwell T."/>
            <person name="Hamlin N."/>
            <person name="Holroyd S."/>
            <person name="Jagels K."/>
            <person name="Karlyshev A.V."/>
            <person name="Leather S."/>
            <person name="Moule S."/>
            <person name="Oyston P.C.F."/>
            <person name="Quail M.A."/>
            <person name="Rutherford K.M."/>
            <person name="Simmonds M."/>
            <person name="Skelton J."/>
            <person name="Stevens K."/>
            <person name="Whitehead S."/>
            <person name="Barrell B.G."/>
        </authorList>
    </citation>
    <scope>NUCLEOTIDE SEQUENCE [LARGE SCALE GENOMIC DNA]</scope>
    <source>
        <strain>CO-92 / Biovar Orientalis</strain>
    </source>
</reference>
<reference key="2">
    <citation type="journal article" date="2002" name="J. Bacteriol.">
        <title>Genome sequence of Yersinia pestis KIM.</title>
        <authorList>
            <person name="Deng W."/>
            <person name="Burland V."/>
            <person name="Plunkett G. III"/>
            <person name="Boutin A."/>
            <person name="Mayhew G.F."/>
            <person name="Liss P."/>
            <person name="Perna N.T."/>
            <person name="Rose D.J."/>
            <person name="Mau B."/>
            <person name="Zhou S."/>
            <person name="Schwartz D.C."/>
            <person name="Fetherston J.D."/>
            <person name="Lindler L.E."/>
            <person name="Brubaker R.R."/>
            <person name="Plano G.V."/>
            <person name="Straley S.C."/>
            <person name="McDonough K.A."/>
            <person name="Nilles M.L."/>
            <person name="Matson J.S."/>
            <person name="Blattner F.R."/>
            <person name="Perry R.D."/>
        </authorList>
    </citation>
    <scope>NUCLEOTIDE SEQUENCE [LARGE SCALE GENOMIC DNA]</scope>
    <source>
        <strain>KIM10+ / Biovar Mediaevalis</strain>
    </source>
</reference>
<reference key="3">
    <citation type="journal article" date="2004" name="DNA Res.">
        <title>Complete genome sequence of Yersinia pestis strain 91001, an isolate avirulent to humans.</title>
        <authorList>
            <person name="Song Y."/>
            <person name="Tong Z."/>
            <person name="Wang J."/>
            <person name="Wang L."/>
            <person name="Guo Z."/>
            <person name="Han Y."/>
            <person name="Zhang J."/>
            <person name="Pei D."/>
            <person name="Zhou D."/>
            <person name="Qin H."/>
            <person name="Pang X."/>
            <person name="Han Y."/>
            <person name="Zhai J."/>
            <person name="Li M."/>
            <person name="Cui B."/>
            <person name="Qi Z."/>
            <person name="Jin L."/>
            <person name="Dai R."/>
            <person name="Chen F."/>
            <person name="Li S."/>
            <person name="Ye C."/>
            <person name="Du Z."/>
            <person name="Lin W."/>
            <person name="Wang J."/>
            <person name="Yu J."/>
            <person name="Yang H."/>
            <person name="Wang J."/>
            <person name="Huang P."/>
            <person name="Yang R."/>
        </authorList>
    </citation>
    <scope>NUCLEOTIDE SEQUENCE [LARGE SCALE GENOMIC DNA]</scope>
    <source>
        <strain>91001 / Biovar Mediaevalis</strain>
    </source>
</reference>
<protein>
    <recommendedName>
        <fullName evidence="1">Large ribosomal subunit protein bL20</fullName>
    </recommendedName>
    <alternativeName>
        <fullName evidence="2">50S ribosomal protein L20</fullName>
    </alternativeName>
</protein>
<comment type="function">
    <text evidence="1">Binds directly to 23S ribosomal RNA and is necessary for the in vitro assembly process of the 50S ribosomal subunit. It is not involved in the protein synthesizing functions of that subunit.</text>
</comment>
<comment type="similarity">
    <text evidence="1">Belongs to the bacterial ribosomal protein bL20 family.</text>
</comment>
<keyword id="KW-1185">Reference proteome</keyword>
<keyword id="KW-0687">Ribonucleoprotein</keyword>
<keyword id="KW-0689">Ribosomal protein</keyword>
<keyword id="KW-0694">RNA-binding</keyword>
<keyword id="KW-0699">rRNA-binding</keyword>
<proteinExistence type="inferred from homology"/>
<sequence>MARVKRGVIARARHKKILKQAKGYYGARSRVYRVAFQAVIKAGQYAYRDRRQRKRQFRQLWIARINAAARQNGLSYSRFINGLKKASVEIDRKILADIAVFDKVAFSALVEKAKAALA</sequence>
<evidence type="ECO:0000255" key="1">
    <source>
        <dbReference type="HAMAP-Rule" id="MF_00382"/>
    </source>
</evidence>
<evidence type="ECO:0000305" key="2"/>
<accession>Q8ZDW8</accession>
<accession>Q0WE94</accession>